<keyword id="KW-1185">Reference proteome</keyword>
<feature type="chain" id="PRO_0000250643" description="Uncharacterized Bro-N domain-containing protein R125">
    <location>
        <begin position="1"/>
        <end position="196"/>
    </location>
</feature>
<feature type="domain" description="Bro-N" evidence="1">
    <location>
        <begin position="58"/>
        <end position="163"/>
    </location>
</feature>
<reference key="1">
    <citation type="journal article" date="2004" name="Science">
        <title>The 1.2-megabase genome sequence of Mimivirus.</title>
        <authorList>
            <person name="Raoult D."/>
            <person name="Audic S."/>
            <person name="Robert C."/>
            <person name="Abergel C."/>
            <person name="Renesto P."/>
            <person name="Ogata H."/>
            <person name="La Scola B."/>
            <person name="Susan M."/>
            <person name="Claverie J.-M."/>
        </authorList>
    </citation>
    <scope>NUCLEOTIDE SEQUENCE [LARGE SCALE GENOMIC DNA]</scope>
    <source>
        <strain>Rowbotham-Bradford</strain>
    </source>
</reference>
<gene>
    <name type="ordered locus">MIMI_R125</name>
</gene>
<protein>
    <recommendedName>
        <fullName>Uncharacterized Bro-N domain-containing protein R125</fullName>
    </recommendedName>
</protein>
<sequence>MEYDNFFIKILESLINDKITLKRQISVNIPDTDNIFGNSDLTTTLWTSQFQCPQKFHHKFFDAIKDSRGINWIRADSFIEILGFKNKPKKVLKKYVSKRYKCYLIDIDSPVKKNLIDTVFKPKTIFIRYEGLLQLISQSNNPKSVKLWEHIAQIILPNNYHKNPVNQASILQRDNRQLVIRHIEEDIYELEDDIRN</sequence>
<proteinExistence type="predicted"/>
<organism>
    <name type="scientific">Acanthamoeba polyphaga mimivirus</name>
    <name type="common">APMV</name>
    <dbReference type="NCBI Taxonomy" id="212035"/>
    <lineage>
        <taxon>Viruses</taxon>
        <taxon>Varidnaviria</taxon>
        <taxon>Bamfordvirae</taxon>
        <taxon>Nucleocytoviricota</taxon>
        <taxon>Megaviricetes</taxon>
        <taxon>Imitervirales</taxon>
        <taxon>Mimiviridae</taxon>
        <taxon>Megamimivirinae</taxon>
        <taxon>Mimivirus</taxon>
        <taxon>Mimivirus bradfordmassiliense</taxon>
    </lineage>
</organism>
<accession>Q5UPJ6</accession>
<organismHost>
    <name type="scientific">Acanthamoeba polyphaga</name>
    <name type="common">Amoeba</name>
    <dbReference type="NCBI Taxonomy" id="5757"/>
</organismHost>
<dbReference type="EMBL" id="AY653733">
    <property type="protein sequence ID" value="AAV50400.1"/>
    <property type="molecule type" value="Genomic_DNA"/>
</dbReference>
<dbReference type="KEGG" id="vg:9924724"/>
<dbReference type="OrthoDB" id="41599at10239"/>
<dbReference type="Proteomes" id="UP000001134">
    <property type="component" value="Genome"/>
</dbReference>
<dbReference type="InterPro" id="IPR003497">
    <property type="entry name" value="BRO_N_domain"/>
</dbReference>
<dbReference type="Pfam" id="PF02498">
    <property type="entry name" value="Bro-N"/>
    <property type="match status" value="1"/>
</dbReference>
<dbReference type="PROSITE" id="PS51750">
    <property type="entry name" value="BRO_N"/>
    <property type="match status" value="1"/>
</dbReference>
<evidence type="ECO:0000255" key="1">
    <source>
        <dbReference type="PROSITE-ProRule" id="PRU01086"/>
    </source>
</evidence>
<name>YR125_MIMIV</name>